<gene>
    <name type="primary">POB3</name>
    <name type="ordered locus">DEHA2D11374g</name>
</gene>
<proteinExistence type="inferred from homology"/>
<keyword id="KW-0158">Chromosome</keyword>
<keyword id="KW-0227">DNA damage</keyword>
<keyword id="KW-0234">DNA repair</keyword>
<keyword id="KW-0235">DNA replication</keyword>
<keyword id="KW-0539">Nucleus</keyword>
<keyword id="KW-1185">Reference proteome</keyword>
<keyword id="KW-0804">Transcription</keyword>
<keyword id="KW-0805">Transcription regulation</keyword>
<accession>Q6BS60</accession>
<sequence>MVNTDFEKIHLNQSKNYGRMRIADSGLGWKASVTNNASASNNAPFLLPSEEILASQWSRGSRGYELRVQTKNKGVVMLDGFDVEDFANLKQELQRNFQVNLEHKEHSLRGWNWGKTDLARNELVFQVNNKPDFEIPYSEISNSNLTGKNEVAVEFNLDGANSKAGDEMVEMRFYIPGTLENETTPAVKNEENGEVKEEETEEISAATVFYEQLKDKADIGQVAGEAIVSFSDVLFLTPRGRYDIDMYPTSLRLRGKTYDYKIQYNQIERIFSLPKPDEAHHLLVIQIDPPLRQGQTKYPFLVMQFAKEEEIELDLNVSEEEYNDKYKDRLKKSYDSQTHLVMSHCFKGLTERRLVVPGSFQSRFLQPGISCSLKASEGYLYPLDRCFLFVTKPTVYIPFSEISSITMSRTGAGGVSTSRTFDMDITLRGSNQSHNFGSIEREEQETIENYCLQKGLRIKNEEKLAKAMLAKAMNETADDDDDADVDMGSAGDDDDESADDDFNSGSDSDVAEEFDSDASVSDAEMSDSNQEPPQKKPKNE</sequence>
<evidence type="ECO:0000250" key="1"/>
<evidence type="ECO:0000250" key="2">
    <source>
        <dbReference type="UniProtKB" id="Q04636"/>
    </source>
</evidence>
<evidence type="ECO:0000256" key="3">
    <source>
        <dbReference type="SAM" id="MobiDB-lite"/>
    </source>
</evidence>
<evidence type="ECO:0000305" key="4"/>
<dbReference type="EMBL" id="CR382136">
    <property type="protein sequence ID" value="CAG87121.1"/>
    <property type="molecule type" value="Genomic_DNA"/>
</dbReference>
<dbReference type="RefSeq" id="XP_458960.1">
    <property type="nucleotide sequence ID" value="XM_458960.1"/>
</dbReference>
<dbReference type="SMR" id="Q6BS60"/>
<dbReference type="FunCoup" id="Q6BS60">
    <property type="interactions" value="1098"/>
</dbReference>
<dbReference type="STRING" id="284592.Q6BS60"/>
<dbReference type="GeneID" id="2901144"/>
<dbReference type="KEGG" id="dha:DEHA2D11374g"/>
<dbReference type="VEuPathDB" id="FungiDB:DEHA2D11374g"/>
<dbReference type="eggNOG" id="KOG0526">
    <property type="taxonomic scope" value="Eukaryota"/>
</dbReference>
<dbReference type="HOGENOM" id="CLU_017374_3_0_1"/>
<dbReference type="InParanoid" id="Q6BS60"/>
<dbReference type="OMA" id="QVVTKIF"/>
<dbReference type="OrthoDB" id="498543at2759"/>
<dbReference type="Proteomes" id="UP000000599">
    <property type="component" value="Chromosome D"/>
</dbReference>
<dbReference type="GO" id="GO:0000781">
    <property type="term" value="C:chromosome, telomeric region"/>
    <property type="evidence" value="ECO:0007669"/>
    <property type="project" value="GOC"/>
</dbReference>
<dbReference type="GO" id="GO:0035101">
    <property type="term" value="C:FACT complex"/>
    <property type="evidence" value="ECO:0007669"/>
    <property type="project" value="EnsemblFungi"/>
</dbReference>
<dbReference type="GO" id="GO:0003677">
    <property type="term" value="F:DNA binding"/>
    <property type="evidence" value="ECO:0007669"/>
    <property type="project" value="InterPro"/>
</dbReference>
<dbReference type="GO" id="GO:0042393">
    <property type="term" value="F:histone binding"/>
    <property type="evidence" value="ECO:0007669"/>
    <property type="project" value="EnsemblFungi"/>
</dbReference>
<dbReference type="GO" id="GO:0031491">
    <property type="term" value="F:nucleosome binding"/>
    <property type="evidence" value="ECO:0007669"/>
    <property type="project" value="EnsemblFungi"/>
</dbReference>
<dbReference type="GO" id="GO:0006281">
    <property type="term" value="P:DNA repair"/>
    <property type="evidence" value="ECO:0007669"/>
    <property type="project" value="UniProtKB-KW"/>
</dbReference>
<dbReference type="GO" id="GO:0006335">
    <property type="term" value="P:DNA replication-dependent chromatin assembly"/>
    <property type="evidence" value="ECO:0007669"/>
    <property type="project" value="EnsemblFungi"/>
</dbReference>
<dbReference type="GO" id="GO:0006261">
    <property type="term" value="P:DNA-templated DNA replication"/>
    <property type="evidence" value="ECO:0007669"/>
    <property type="project" value="EnsemblFungi"/>
</dbReference>
<dbReference type="GO" id="GO:0034728">
    <property type="term" value="P:nucleosome organization"/>
    <property type="evidence" value="ECO:0007669"/>
    <property type="project" value="EnsemblFungi"/>
</dbReference>
<dbReference type="GO" id="GO:0031508">
    <property type="term" value="P:pericentric heterochromatin formation"/>
    <property type="evidence" value="ECO:0007669"/>
    <property type="project" value="EnsemblFungi"/>
</dbReference>
<dbReference type="GO" id="GO:0045899">
    <property type="term" value="P:positive regulation of RNA polymerase II transcription preinitiation complex assembly"/>
    <property type="evidence" value="ECO:0007669"/>
    <property type="project" value="EnsemblFungi"/>
</dbReference>
<dbReference type="GO" id="GO:0030466">
    <property type="term" value="P:silent mating-type cassette heterochromatin formation"/>
    <property type="evidence" value="ECO:0007669"/>
    <property type="project" value="EnsemblFungi"/>
</dbReference>
<dbReference type="GO" id="GO:0031509">
    <property type="term" value="P:subtelomeric heterochromatin formation"/>
    <property type="evidence" value="ECO:0007669"/>
    <property type="project" value="EnsemblFungi"/>
</dbReference>
<dbReference type="CDD" id="cd13230">
    <property type="entry name" value="PH1_SSRP1-like"/>
    <property type="match status" value="1"/>
</dbReference>
<dbReference type="CDD" id="cd13231">
    <property type="entry name" value="PH2_SSRP1-like"/>
    <property type="match status" value="1"/>
</dbReference>
<dbReference type="CDD" id="cd13229">
    <property type="entry name" value="PH_TFIIH"/>
    <property type="match status" value="1"/>
</dbReference>
<dbReference type="FunFam" id="2.30.29.150:FF:000001">
    <property type="entry name" value="Fact complex subunit ssrp1"/>
    <property type="match status" value="1"/>
</dbReference>
<dbReference type="FunFam" id="2.30.29.30:FF:000098">
    <property type="entry name" value="Fact complex subunit ssrp1"/>
    <property type="match status" value="1"/>
</dbReference>
<dbReference type="Gene3D" id="2.30.29.150">
    <property type="match status" value="1"/>
</dbReference>
<dbReference type="Gene3D" id="2.30.29.30">
    <property type="entry name" value="Pleckstrin-homology domain (PH domain)/Phosphotyrosine-binding domain (PTB)"/>
    <property type="match status" value="2"/>
</dbReference>
<dbReference type="Gene3D" id="2.30.29.220">
    <property type="entry name" value="Structure-specific recognition protein (SSRP1)"/>
    <property type="match status" value="1"/>
</dbReference>
<dbReference type="InterPro" id="IPR011993">
    <property type="entry name" value="PH-like_dom_sf"/>
</dbReference>
<dbReference type="InterPro" id="IPR013719">
    <property type="entry name" value="RTT106/SPT16-like_middle_dom"/>
</dbReference>
<dbReference type="InterPro" id="IPR050454">
    <property type="entry name" value="RTT106/SSRP1_HistChap/FACT"/>
</dbReference>
<dbReference type="InterPro" id="IPR048993">
    <property type="entry name" value="SSRP1-like_PH1"/>
</dbReference>
<dbReference type="InterPro" id="IPR000969">
    <property type="entry name" value="SSRP1/POB3"/>
</dbReference>
<dbReference type="InterPro" id="IPR035417">
    <property type="entry name" value="SSRP1/POB3_N"/>
</dbReference>
<dbReference type="InterPro" id="IPR024954">
    <property type="entry name" value="SSRP1_DD"/>
</dbReference>
<dbReference type="InterPro" id="IPR038167">
    <property type="entry name" value="SSRP1_sf"/>
</dbReference>
<dbReference type="PANTHER" id="PTHR45849">
    <property type="entry name" value="FACT COMPLEX SUBUNIT SSRP1"/>
    <property type="match status" value="1"/>
</dbReference>
<dbReference type="PANTHER" id="PTHR45849:SF1">
    <property type="entry name" value="FACT COMPLEX SUBUNIT SSRP1"/>
    <property type="match status" value="1"/>
</dbReference>
<dbReference type="Pfam" id="PF21103">
    <property type="entry name" value="PH1_SSRP1-like"/>
    <property type="match status" value="1"/>
</dbReference>
<dbReference type="Pfam" id="PF17292">
    <property type="entry name" value="POB3_N"/>
    <property type="match status" value="1"/>
</dbReference>
<dbReference type="Pfam" id="PF08512">
    <property type="entry name" value="Rttp106-like_middle"/>
    <property type="match status" value="1"/>
</dbReference>
<dbReference type="Pfam" id="PF03531">
    <property type="entry name" value="SSrecog"/>
    <property type="match status" value="1"/>
</dbReference>
<dbReference type="PRINTS" id="PR00887">
    <property type="entry name" value="SSRCOGNITION"/>
</dbReference>
<dbReference type="SMART" id="SM01287">
    <property type="entry name" value="Rtt106"/>
    <property type="match status" value="1"/>
</dbReference>
<dbReference type="SUPFAM" id="SSF50729">
    <property type="entry name" value="PH domain-like"/>
    <property type="match status" value="1"/>
</dbReference>
<protein>
    <recommendedName>
        <fullName>FACT complex subunit POB3</fullName>
    </recommendedName>
    <alternativeName>
        <fullName>Facilitates chromatin transcription complex subunit POB3</fullName>
    </alternativeName>
</protein>
<organism>
    <name type="scientific">Debaryomyces hansenii (strain ATCC 36239 / CBS 767 / BCRC 21394 / JCM 1990 / NBRC 0083 / IGC 2968)</name>
    <name type="common">Yeast</name>
    <name type="synonym">Torulaspora hansenii</name>
    <dbReference type="NCBI Taxonomy" id="284592"/>
    <lineage>
        <taxon>Eukaryota</taxon>
        <taxon>Fungi</taxon>
        <taxon>Dikarya</taxon>
        <taxon>Ascomycota</taxon>
        <taxon>Saccharomycotina</taxon>
        <taxon>Pichiomycetes</taxon>
        <taxon>Debaryomycetaceae</taxon>
        <taxon>Debaryomyces</taxon>
    </lineage>
</organism>
<feature type="chain" id="PRO_0000245205" description="FACT complex subunit POB3">
    <location>
        <begin position="1"/>
        <end position="540"/>
    </location>
</feature>
<feature type="region of interest" description="Disordered" evidence="3">
    <location>
        <begin position="475"/>
        <end position="540"/>
    </location>
</feature>
<feature type="compositionally biased region" description="Acidic residues" evidence="3">
    <location>
        <begin position="476"/>
        <end position="502"/>
    </location>
</feature>
<comment type="function">
    <text evidence="1">Component of the FACT complex, a general chromatin factor that acts to reorganize nucleosomes. The FACT complex is involved in multiple processes that require DNA as a template such as mRNA elongation, DNA replication and DNA repair. During transcription elongation the FACT complex acts as a histone chaperone that both destabilizes and restores nucleosomal structure. It facilitates the passage of RNA polymerase II and transcription by promoting the dissociation of one histone H2A-H2B dimer from the nucleosome, then subsequently promotes the reestablishment of the nucleosome following the passage of RNA polymerase II (By similarity).</text>
</comment>
<comment type="subunit">
    <text evidence="1">Forms a stable heterodimer with SPT16. The SPT16-POB3 dimer weakly associates with multiple molecules of NHP6 to form the FACT complex (By similarity).</text>
</comment>
<comment type="subcellular location">
    <subcellularLocation>
        <location evidence="2">Nucleus</location>
    </subcellularLocation>
    <subcellularLocation>
        <location evidence="2">Chromosome</location>
    </subcellularLocation>
    <text evidence="2">Colocalizes with RNA polymerase II on chromatin. Recruited to actively transcribed loci.</text>
</comment>
<comment type="miscellaneous">
    <text>In contrast to the orthologous protein in animals and plants, this protein does not contain a HMG box DNA-binding domain. This function may instead be provided by the HMG box of the associated NHP6 protein in the FACT complex of fungi.</text>
</comment>
<comment type="similarity">
    <text evidence="4">Belongs to the SSRP1 family.</text>
</comment>
<reference key="1">
    <citation type="journal article" date="2004" name="Nature">
        <title>Genome evolution in yeasts.</title>
        <authorList>
            <person name="Dujon B."/>
            <person name="Sherman D."/>
            <person name="Fischer G."/>
            <person name="Durrens P."/>
            <person name="Casaregola S."/>
            <person name="Lafontaine I."/>
            <person name="de Montigny J."/>
            <person name="Marck C."/>
            <person name="Neuveglise C."/>
            <person name="Talla E."/>
            <person name="Goffard N."/>
            <person name="Frangeul L."/>
            <person name="Aigle M."/>
            <person name="Anthouard V."/>
            <person name="Babour A."/>
            <person name="Barbe V."/>
            <person name="Barnay S."/>
            <person name="Blanchin S."/>
            <person name="Beckerich J.-M."/>
            <person name="Beyne E."/>
            <person name="Bleykasten C."/>
            <person name="Boisrame A."/>
            <person name="Boyer J."/>
            <person name="Cattolico L."/>
            <person name="Confanioleri F."/>
            <person name="de Daruvar A."/>
            <person name="Despons L."/>
            <person name="Fabre E."/>
            <person name="Fairhead C."/>
            <person name="Ferry-Dumazet H."/>
            <person name="Groppi A."/>
            <person name="Hantraye F."/>
            <person name="Hennequin C."/>
            <person name="Jauniaux N."/>
            <person name="Joyet P."/>
            <person name="Kachouri R."/>
            <person name="Kerrest A."/>
            <person name="Koszul R."/>
            <person name="Lemaire M."/>
            <person name="Lesur I."/>
            <person name="Ma L."/>
            <person name="Muller H."/>
            <person name="Nicaud J.-M."/>
            <person name="Nikolski M."/>
            <person name="Oztas S."/>
            <person name="Ozier-Kalogeropoulos O."/>
            <person name="Pellenz S."/>
            <person name="Potier S."/>
            <person name="Richard G.-F."/>
            <person name="Straub M.-L."/>
            <person name="Suleau A."/>
            <person name="Swennen D."/>
            <person name="Tekaia F."/>
            <person name="Wesolowski-Louvel M."/>
            <person name="Westhof E."/>
            <person name="Wirth B."/>
            <person name="Zeniou-Meyer M."/>
            <person name="Zivanovic Y."/>
            <person name="Bolotin-Fukuhara M."/>
            <person name="Thierry A."/>
            <person name="Bouchier C."/>
            <person name="Caudron B."/>
            <person name="Scarpelli C."/>
            <person name="Gaillardin C."/>
            <person name="Weissenbach J."/>
            <person name="Wincker P."/>
            <person name="Souciet J.-L."/>
        </authorList>
    </citation>
    <scope>NUCLEOTIDE SEQUENCE [LARGE SCALE GENOMIC DNA]</scope>
    <source>
        <strain>ATCC 36239 / CBS 767 / BCRC 21394 / JCM 1990 / NBRC 0083 / IGC 2968</strain>
    </source>
</reference>
<name>POB3_DEBHA</name>